<sequence length="466" mass="52033">MSKLRVRFAPSPTGYLHIGGARTALFNFLLARKEQGTFVLRIEDTDVARSTQESVDAILQAMDWLGMSCDEGPIYQSDRFDLYRAKIDQLVEQGKAYRCYCTAEELEKKREAAMQDGRKPKYDGTCRQLQEVCDDKPYVIRFKAPQEGATTFHDRIKGDITFQNEELDDLIIQRTDGTPTYNFVVVVDDAEMGINLVLRGDDHINNTPRQIMLYKALGYPVPDFAHVPMILGADKSRLSKRHGATSVMAYKEMGYLPEALVNYLVRLGWSHGDQEIFTQDELTQLFSLDNIGKSASVFNPEKLIWLNSHYIKTGNPGRLAQLLAGHLAADGIDVANIADLEPIVVALQDRSKTLVDMAQQARCFFADDIQFDEKAAAKFLIEDNRFVFEALSAALESCDDWKEDILDGVFKGVLEATGLKFGKLAQPARVALVGGTTGPSICLIMQILGREKTLARLQGAMSRLGQ</sequence>
<keyword id="KW-0030">Aminoacyl-tRNA synthetase</keyword>
<keyword id="KW-0067">ATP-binding</keyword>
<keyword id="KW-0963">Cytoplasm</keyword>
<keyword id="KW-0436">Ligase</keyword>
<keyword id="KW-0547">Nucleotide-binding</keyword>
<keyword id="KW-0648">Protein biosynthesis</keyword>
<keyword id="KW-1185">Reference proteome</keyword>
<dbReference type="EC" id="6.1.1.17" evidence="1"/>
<dbReference type="EMBL" id="CP000142">
    <property type="protein sequence ID" value="ABA88894.1"/>
    <property type="molecule type" value="Genomic_DNA"/>
</dbReference>
<dbReference type="RefSeq" id="WP_011341383.1">
    <property type="nucleotide sequence ID" value="NC_007498.2"/>
</dbReference>
<dbReference type="SMR" id="Q3A413"/>
<dbReference type="STRING" id="338963.Pcar_1650"/>
<dbReference type="KEGG" id="pca:Pcar_1650"/>
<dbReference type="eggNOG" id="COG0008">
    <property type="taxonomic scope" value="Bacteria"/>
</dbReference>
<dbReference type="HOGENOM" id="CLU_015768_6_0_7"/>
<dbReference type="OrthoDB" id="9807503at2"/>
<dbReference type="Proteomes" id="UP000002534">
    <property type="component" value="Chromosome"/>
</dbReference>
<dbReference type="GO" id="GO:0005829">
    <property type="term" value="C:cytosol"/>
    <property type="evidence" value="ECO:0007669"/>
    <property type="project" value="TreeGrafter"/>
</dbReference>
<dbReference type="GO" id="GO:0005524">
    <property type="term" value="F:ATP binding"/>
    <property type="evidence" value="ECO:0007669"/>
    <property type="project" value="UniProtKB-UniRule"/>
</dbReference>
<dbReference type="GO" id="GO:0004818">
    <property type="term" value="F:glutamate-tRNA ligase activity"/>
    <property type="evidence" value="ECO:0007669"/>
    <property type="project" value="UniProtKB-UniRule"/>
</dbReference>
<dbReference type="GO" id="GO:0000049">
    <property type="term" value="F:tRNA binding"/>
    <property type="evidence" value="ECO:0007669"/>
    <property type="project" value="InterPro"/>
</dbReference>
<dbReference type="GO" id="GO:0008270">
    <property type="term" value="F:zinc ion binding"/>
    <property type="evidence" value="ECO:0007669"/>
    <property type="project" value="InterPro"/>
</dbReference>
<dbReference type="GO" id="GO:0006424">
    <property type="term" value="P:glutamyl-tRNA aminoacylation"/>
    <property type="evidence" value="ECO:0007669"/>
    <property type="project" value="UniProtKB-UniRule"/>
</dbReference>
<dbReference type="CDD" id="cd00808">
    <property type="entry name" value="GluRS_core"/>
    <property type="match status" value="1"/>
</dbReference>
<dbReference type="FunFam" id="3.40.50.620:FF:000007">
    <property type="entry name" value="Glutamate--tRNA ligase"/>
    <property type="match status" value="1"/>
</dbReference>
<dbReference type="Gene3D" id="1.10.10.350">
    <property type="match status" value="1"/>
</dbReference>
<dbReference type="Gene3D" id="3.40.50.620">
    <property type="entry name" value="HUPs"/>
    <property type="match status" value="1"/>
</dbReference>
<dbReference type="HAMAP" id="MF_00022">
    <property type="entry name" value="Glu_tRNA_synth_type1"/>
    <property type="match status" value="1"/>
</dbReference>
<dbReference type="InterPro" id="IPR045462">
    <property type="entry name" value="aa-tRNA-synth_I_cd-bd"/>
</dbReference>
<dbReference type="InterPro" id="IPR020751">
    <property type="entry name" value="aa-tRNA-synth_I_codon-bd_sub2"/>
</dbReference>
<dbReference type="InterPro" id="IPR001412">
    <property type="entry name" value="aa-tRNA-synth_I_CS"/>
</dbReference>
<dbReference type="InterPro" id="IPR008925">
    <property type="entry name" value="aa_tRNA-synth_I_cd-bd_sf"/>
</dbReference>
<dbReference type="InterPro" id="IPR004527">
    <property type="entry name" value="Glu-tRNA-ligase_bac/mito"/>
</dbReference>
<dbReference type="InterPro" id="IPR000924">
    <property type="entry name" value="Glu/Gln-tRNA-synth"/>
</dbReference>
<dbReference type="InterPro" id="IPR020058">
    <property type="entry name" value="Glu/Gln-tRNA-synth_Ib_cat-dom"/>
</dbReference>
<dbReference type="InterPro" id="IPR049940">
    <property type="entry name" value="GluQ/Sye"/>
</dbReference>
<dbReference type="InterPro" id="IPR033910">
    <property type="entry name" value="GluRS_core"/>
</dbReference>
<dbReference type="InterPro" id="IPR014729">
    <property type="entry name" value="Rossmann-like_a/b/a_fold"/>
</dbReference>
<dbReference type="NCBIfam" id="TIGR00464">
    <property type="entry name" value="gltX_bact"/>
    <property type="match status" value="1"/>
</dbReference>
<dbReference type="PANTHER" id="PTHR43311">
    <property type="entry name" value="GLUTAMATE--TRNA LIGASE"/>
    <property type="match status" value="1"/>
</dbReference>
<dbReference type="PANTHER" id="PTHR43311:SF2">
    <property type="entry name" value="GLUTAMATE--TRNA LIGASE, MITOCHONDRIAL-RELATED"/>
    <property type="match status" value="1"/>
</dbReference>
<dbReference type="Pfam" id="PF19269">
    <property type="entry name" value="Anticodon_2"/>
    <property type="match status" value="1"/>
</dbReference>
<dbReference type="Pfam" id="PF00749">
    <property type="entry name" value="tRNA-synt_1c"/>
    <property type="match status" value="1"/>
</dbReference>
<dbReference type="PRINTS" id="PR00987">
    <property type="entry name" value="TRNASYNTHGLU"/>
</dbReference>
<dbReference type="SUPFAM" id="SSF48163">
    <property type="entry name" value="An anticodon-binding domain of class I aminoacyl-tRNA synthetases"/>
    <property type="match status" value="1"/>
</dbReference>
<dbReference type="SUPFAM" id="SSF52374">
    <property type="entry name" value="Nucleotidylyl transferase"/>
    <property type="match status" value="1"/>
</dbReference>
<dbReference type="PROSITE" id="PS00178">
    <property type="entry name" value="AA_TRNA_LIGASE_I"/>
    <property type="match status" value="1"/>
</dbReference>
<accession>Q3A413</accession>
<organism>
    <name type="scientific">Syntrophotalea carbinolica (strain DSM 2380 / NBRC 103641 / GraBd1)</name>
    <name type="common">Pelobacter carbinolicus</name>
    <dbReference type="NCBI Taxonomy" id="338963"/>
    <lineage>
        <taxon>Bacteria</taxon>
        <taxon>Pseudomonadati</taxon>
        <taxon>Thermodesulfobacteriota</taxon>
        <taxon>Desulfuromonadia</taxon>
        <taxon>Desulfuromonadales</taxon>
        <taxon>Syntrophotaleaceae</taxon>
        <taxon>Syntrophotalea</taxon>
    </lineage>
</organism>
<comment type="function">
    <text evidence="1">Catalyzes the attachment of glutamate to tRNA(Glu) in a two-step reaction: glutamate is first activated by ATP to form Glu-AMP and then transferred to the acceptor end of tRNA(Glu).</text>
</comment>
<comment type="catalytic activity">
    <reaction evidence="1">
        <text>tRNA(Glu) + L-glutamate + ATP = L-glutamyl-tRNA(Glu) + AMP + diphosphate</text>
        <dbReference type="Rhea" id="RHEA:23540"/>
        <dbReference type="Rhea" id="RHEA-COMP:9663"/>
        <dbReference type="Rhea" id="RHEA-COMP:9680"/>
        <dbReference type="ChEBI" id="CHEBI:29985"/>
        <dbReference type="ChEBI" id="CHEBI:30616"/>
        <dbReference type="ChEBI" id="CHEBI:33019"/>
        <dbReference type="ChEBI" id="CHEBI:78442"/>
        <dbReference type="ChEBI" id="CHEBI:78520"/>
        <dbReference type="ChEBI" id="CHEBI:456215"/>
        <dbReference type="EC" id="6.1.1.17"/>
    </reaction>
</comment>
<comment type="subunit">
    <text evidence="1">Monomer.</text>
</comment>
<comment type="subcellular location">
    <subcellularLocation>
        <location evidence="1">Cytoplasm</location>
    </subcellularLocation>
</comment>
<comment type="similarity">
    <text evidence="1">Belongs to the class-I aminoacyl-tRNA synthetase family. Glutamate--tRNA ligase type 1 subfamily.</text>
</comment>
<feature type="chain" id="PRO_0000237383" description="Glutamate--tRNA ligase">
    <location>
        <begin position="1"/>
        <end position="466"/>
    </location>
</feature>
<feature type="short sequence motif" description="'HIGH' region" evidence="1">
    <location>
        <begin position="10"/>
        <end position="20"/>
    </location>
</feature>
<feature type="short sequence motif" description="'KMSKS' region" evidence="1">
    <location>
        <begin position="237"/>
        <end position="241"/>
    </location>
</feature>
<feature type="binding site" evidence="1">
    <location>
        <position position="240"/>
    </location>
    <ligand>
        <name>ATP</name>
        <dbReference type="ChEBI" id="CHEBI:30616"/>
    </ligand>
</feature>
<proteinExistence type="inferred from homology"/>
<reference key="1">
    <citation type="submission" date="2005-10" db="EMBL/GenBank/DDBJ databases">
        <title>Complete sequence of Pelobacter carbinolicus DSM 2380.</title>
        <authorList>
            <person name="Copeland A."/>
            <person name="Lucas S."/>
            <person name="Lapidus A."/>
            <person name="Barry K."/>
            <person name="Detter J.C."/>
            <person name="Glavina T."/>
            <person name="Hammon N."/>
            <person name="Israni S."/>
            <person name="Pitluck S."/>
            <person name="Chertkov O."/>
            <person name="Schmutz J."/>
            <person name="Larimer F."/>
            <person name="Land M."/>
            <person name="Kyrpides N."/>
            <person name="Ivanova N."/>
            <person name="Richardson P."/>
        </authorList>
    </citation>
    <scope>NUCLEOTIDE SEQUENCE [LARGE SCALE GENOMIC DNA]</scope>
    <source>
        <strain>DSM 2380 / NBRC 103641 / GraBd1</strain>
    </source>
</reference>
<name>SYE_SYNC1</name>
<protein>
    <recommendedName>
        <fullName evidence="1">Glutamate--tRNA ligase</fullName>
        <ecNumber evidence="1">6.1.1.17</ecNumber>
    </recommendedName>
    <alternativeName>
        <fullName evidence="1">Glutamyl-tRNA synthetase</fullName>
        <shortName evidence="1">GluRS</shortName>
    </alternativeName>
</protein>
<gene>
    <name evidence="1" type="primary">gltX</name>
    <name type="ordered locus">Pcar_1650</name>
</gene>
<evidence type="ECO:0000255" key="1">
    <source>
        <dbReference type="HAMAP-Rule" id="MF_00022"/>
    </source>
</evidence>